<keyword id="KW-0903">Direct protein sequencing</keyword>
<keyword id="KW-1015">Disulfide bond</keyword>
<keyword id="KW-0964">Secreted</keyword>
<keyword id="KW-0800">Toxin</keyword>
<proteinExistence type="evidence at protein level"/>
<feature type="chain" id="PRO_0000093523" description="Cytotoxin homolog S4C8" evidence="2">
    <location>
        <begin position="1"/>
        <end position="64"/>
    </location>
</feature>
<feature type="disulfide bond" evidence="1">
    <location>
        <begin position="3"/>
        <end position="22"/>
    </location>
</feature>
<feature type="disulfide bond" evidence="1">
    <location>
        <begin position="15"/>
        <end position="40"/>
    </location>
</feature>
<feature type="disulfide bond" evidence="1">
    <location>
        <begin position="44"/>
        <end position="56"/>
    </location>
</feature>
<feature type="disulfide bond" evidence="1">
    <location>
        <begin position="57"/>
        <end position="62"/>
    </location>
</feature>
<organism>
    <name type="scientific">Aspidelaps scutatus</name>
    <name type="common">Shield-nose snake</name>
    <dbReference type="NCBI Taxonomy" id="8607"/>
    <lineage>
        <taxon>Eukaryota</taxon>
        <taxon>Metazoa</taxon>
        <taxon>Chordata</taxon>
        <taxon>Craniata</taxon>
        <taxon>Vertebrata</taxon>
        <taxon>Euteleostomi</taxon>
        <taxon>Lepidosauria</taxon>
        <taxon>Squamata</taxon>
        <taxon>Bifurcata</taxon>
        <taxon>Unidentata</taxon>
        <taxon>Episquamata</taxon>
        <taxon>Toxicofera</taxon>
        <taxon>Serpentes</taxon>
        <taxon>Colubroidea</taxon>
        <taxon>Elapidae</taxon>
        <taxon>Elapidae incertae sedis</taxon>
        <taxon>Aspidelaps</taxon>
    </lineage>
</organism>
<sequence length="64" mass="7317">RKCFNSPGRLVSKPCPEGNNLCYKMSNRMYPPGFNVRRGCAETCPRRNRLLEVVCCCDTDNCNK</sequence>
<evidence type="ECO:0000250" key="1">
    <source>
        <dbReference type="UniProtKB" id="P60301"/>
    </source>
</evidence>
<evidence type="ECO:0000269" key="2">
    <source>
    </source>
</evidence>
<evidence type="ECO:0000305" key="3"/>
<name>3SOD_ASPSC</name>
<protein>
    <recommendedName>
        <fullName>Cytotoxin homolog S4C8</fullName>
    </recommendedName>
</protein>
<comment type="subcellular location">
    <subcellularLocation>
        <location evidence="2">Secreted</location>
    </subcellularLocation>
</comment>
<comment type="tissue specificity">
    <text evidence="3">Expressed by the venom gland.</text>
</comment>
<comment type="toxic dose">
    <text evidence="2">LD(50) is 9.4 mg/kg by intravenous injection.</text>
</comment>
<comment type="miscellaneous">
    <text evidence="3">Is classified as a P-type cytotoxin, since a proline residue stands at position 31 (Pro-31 in standard classification).</text>
</comment>
<comment type="similarity">
    <text evidence="3">Belongs to the three-finger toxin family. Short-chain subfamily. Orphan group XIII sub-subfamily.</text>
</comment>
<accession>P19004</accession>
<reference key="1">
    <citation type="journal article" date="1988" name="Int. J. Biochem.">
        <title>Snake venom toxins -- II. The primary structures of cytotoxin homologues S3C2 and S4C8 from Aspidelaps scutatus (shield or shield-nose snake) venom.</title>
        <authorList>
            <person name="Joubert F.J."/>
        </authorList>
    </citation>
    <scope>PROTEIN SEQUENCE</scope>
    <scope>TOXIC DOSE</scope>
    <scope>SUBCELLULAR LOCATION</scope>
    <source>
        <tissue>Venom</tissue>
    </source>
</reference>
<dbReference type="PIR" id="JS0299">
    <property type="entry name" value="JS0299"/>
</dbReference>
<dbReference type="SMR" id="P19004"/>
<dbReference type="GO" id="GO:0005576">
    <property type="term" value="C:extracellular region"/>
    <property type="evidence" value="ECO:0007669"/>
    <property type="project" value="UniProtKB-SubCell"/>
</dbReference>
<dbReference type="GO" id="GO:0090729">
    <property type="term" value="F:toxin activity"/>
    <property type="evidence" value="ECO:0007669"/>
    <property type="project" value="UniProtKB-KW"/>
</dbReference>
<dbReference type="CDD" id="cd00206">
    <property type="entry name" value="TFP_snake_toxin"/>
    <property type="match status" value="1"/>
</dbReference>
<dbReference type="Gene3D" id="2.10.60.10">
    <property type="entry name" value="CD59"/>
    <property type="match status" value="1"/>
</dbReference>
<dbReference type="InterPro" id="IPR003572">
    <property type="entry name" value="Cytotoxin_Cobra"/>
</dbReference>
<dbReference type="InterPro" id="IPR003571">
    <property type="entry name" value="Snake_3FTx"/>
</dbReference>
<dbReference type="InterPro" id="IPR045860">
    <property type="entry name" value="Snake_toxin-like_sf"/>
</dbReference>
<dbReference type="InterPro" id="IPR018354">
    <property type="entry name" value="Snake_toxin_con_site"/>
</dbReference>
<dbReference type="InterPro" id="IPR054131">
    <property type="entry name" value="Toxin_cobra-type"/>
</dbReference>
<dbReference type="Pfam" id="PF21947">
    <property type="entry name" value="Toxin_cobra-type"/>
    <property type="match status" value="1"/>
</dbReference>
<dbReference type="PRINTS" id="PR00282">
    <property type="entry name" value="CYTOTOXIN"/>
</dbReference>
<dbReference type="SUPFAM" id="SSF57302">
    <property type="entry name" value="Snake toxin-like"/>
    <property type="match status" value="1"/>
</dbReference>
<dbReference type="PROSITE" id="PS00272">
    <property type="entry name" value="SNAKE_TOXIN"/>
    <property type="match status" value="1"/>
</dbReference>